<proteinExistence type="inferred from homology"/>
<feature type="chain" id="PRO_0000170436" description="Nucleoid-associated protein SAV0479">
    <location>
        <begin position="1"/>
        <end position="105"/>
    </location>
</feature>
<feature type="region of interest" description="Disordered" evidence="2">
    <location>
        <begin position="1"/>
        <end position="33"/>
    </location>
</feature>
<feature type="compositionally biased region" description="Low complexity" evidence="2">
    <location>
        <begin position="7"/>
        <end position="16"/>
    </location>
</feature>
<feature type="compositionally biased region" description="Basic and acidic residues" evidence="2">
    <location>
        <begin position="21"/>
        <end position="33"/>
    </location>
</feature>
<accession>P67262</accession>
<accession>Q99WC4</accession>
<evidence type="ECO:0000255" key="1">
    <source>
        <dbReference type="HAMAP-Rule" id="MF_00274"/>
    </source>
</evidence>
<evidence type="ECO:0000256" key="2">
    <source>
        <dbReference type="SAM" id="MobiDB-lite"/>
    </source>
</evidence>
<reference key="1">
    <citation type="journal article" date="2001" name="Lancet">
        <title>Whole genome sequencing of meticillin-resistant Staphylococcus aureus.</title>
        <authorList>
            <person name="Kuroda M."/>
            <person name="Ohta T."/>
            <person name="Uchiyama I."/>
            <person name="Baba T."/>
            <person name="Yuzawa H."/>
            <person name="Kobayashi I."/>
            <person name="Cui L."/>
            <person name="Oguchi A."/>
            <person name="Aoki K."/>
            <person name="Nagai Y."/>
            <person name="Lian J.-Q."/>
            <person name="Ito T."/>
            <person name="Kanamori M."/>
            <person name="Matsumaru H."/>
            <person name="Maruyama A."/>
            <person name="Murakami H."/>
            <person name="Hosoyama A."/>
            <person name="Mizutani-Ui Y."/>
            <person name="Takahashi N.K."/>
            <person name="Sawano T."/>
            <person name="Inoue R."/>
            <person name="Kaito C."/>
            <person name="Sekimizu K."/>
            <person name="Hirakawa H."/>
            <person name="Kuhara S."/>
            <person name="Goto S."/>
            <person name="Yabuzaki J."/>
            <person name="Kanehisa M."/>
            <person name="Yamashita A."/>
            <person name="Oshima K."/>
            <person name="Furuya K."/>
            <person name="Yoshino C."/>
            <person name="Shiba T."/>
            <person name="Hattori M."/>
            <person name="Ogasawara N."/>
            <person name="Hayashi H."/>
            <person name="Hiramatsu K."/>
        </authorList>
    </citation>
    <scope>NUCLEOTIDE SEQUENCE [LARGE SCALE GENOMIC DNA]</scope>
    <source>
        <strain>Mu50 / ATCC 700699</strain>
    </source>
</reference>
<sequence length="105" mass="11597">MRGGGNMQQMMKQMQKMQKKMAQEQEKLKEERIVGTAGGGMVAVTVTGHKEVVDVEIKEEAVDPDDIEMLQDLVLAATNEAMNKADELTQERLGKHTQGLNIPGM</sequence>
<organism>
    <name type="scientific">Staphylococcus aureus (strain Mu50 / ATCC 700699)</name>
    <dbReference type="NCBI Taxonomy" id="158878"/>
    <lineage>
        <taxon>Bacteria</taxon>
        <taxon>Bacillati</taxon>
        <taxon>Bacillota</taxon>
        <taxon>Bacilli</taxon>
        <taxon>Bacillales</taxon>
        <taxon>Staphylococcaceae</taxon>
        <taxon>Staphylococcus</taxon>
    </lineage>
</organism>
<gene>
    <name type="ordered locus">SAV0479</name>
</gene>
<comment type="function">
    <text evidence="1">Binds to DNA and alters its conformation. May be involved in regulation of gene expression, nucleoid organization and DNA protection.</text>
</comment>
<comment type="subunit">
    <text evidence="1">Homodimer.</text>
</comment>
<comment type="subcellular location">
    <subcellularLocation>
        <location evidence="1">Cytoplasm</location>
        <location evidence="1">Nucleoid</location>
    </subcellularLocation>
</comment>
<comment type="similarity">
    <text evidence="1">Belongs to the YbaB/EbfC family.</text>
</comment>
<name>Y479_STAAM</name>
<dbReference type="EMBL" id="BA000017">
    <property type="protein sequence ID" value="BAB56641.1"/>
    <property type="molecule type" value="Genomic_DNA"/>
</dbReference>
<dbReference type="RefSeq" id="WP_001213992.1">
    <property type="nucleotide sequence ID" value="NC_002758.2"/>
</dbReference>
<dbReference type="SMR" id="P67262"/>
<dbReference type="KEGG" id="sav:SAV0479"/>
<dbReference type="HOGENOM" id="CLU_140930_1_0_9"/>
<dbReference type="PhylomeDB" id="P67262"/>
<dbReference type="Proteomes" id="UP000002481">
    <property type="component" value="Chromosome"/>
</dbReference>
<dbReference type="GO" id="GO:0043590">
    <property type="term" value="C:bacterial nucleoid"/>
    <property type="evidence" value="ECO:0007669"/>
    <property type="project" value="UniProtKB-UniRule"/>
</dbReference>
<dbReference type="GO" id="GO:0005829">
    <property type="term" value="C:cytosol"/>
    <property type="evidence" value="ECO:0007669"/>
    <property type="project" value="TreeGrafter"/>
</dbReference>
<dbReference type="GO" id="GO:0003677">
    <property type="term" value="F:DNA binding"/>
    <property type="evidence" value="ECO:0007669"/>
    <property type="project" value="UniProtKB-UniRule"/>
</dbReference>
<dbReference type="FunFam" id="3.30.1310.10:FF:000002">
    <property type="entry name" value="Nucleoid-associated protein IKC_06587"/>
    <property type="match status" value="1"/>
</dbReference>
<dbReference type="Gene3D" id="3.30.1310.10">
    <property type="entry name" value="Nucleoid-associated protein YbaB-like domain"/>
    <property type="match status" value="1"/>
</dbReference>
<dbReference type="HAMAP" id="MF_00274">
    <property type="entry name" value="DNA_YbaB_EbfC"/>
    <property type="match status" value="1"/>
</dbReference>
<dbReference type="InterPro" id="IPR036894">
    <property type="entry name" value="YbaB-like_sf"/>
</dbReference>
<dbReference type="InterPro" id="IPR004401">
    <property type="entry name" value="YbaB/EbfC"/>
</dbReference>
<dbReference type="NCBIfam" id="TIGR00103">
    <property type="entry name" value="DNA_YbaB_EbfC"/>
    <property type="match status" value="1"/>
</dbReference>
<dbReference type="PANTHER" id="PTHR33449">
    <property type="entry name" value="NUCLEOID-ASSOCIATED PROTEIN YBAB"/>
    <property type="match status" value="1"/>
</dbReference>
<dbReference type="PANTHER" id="PTHR33449:SF1">
    <property type="entry name" value="NUCLEOID-ASSOCIATED PROTEIN YBAB"/>
    <property type="match status" value="1"/>
</dbReference>
<dbReference type="Pfam" id="PF02575">
    <property type="entry name" value="YbaB_DNA_bd"/>
    <property type="match status" value="1"/>
</dbReference>
<dbReference type="PIRSF" id="PIRSF004555">
    <property type="entry name" value="UCP004555"/>
    <property type="match status" value="1"/>
</dbReference>
<dbReference type="SUPFAM" id="SSF82607">
    <property type="entry name" value="YbaB-like"/>
    <property type="match status" value="1"/>
</dbReference>
<keyword id="KW-0963">Cytoplasm</keyword>
<keyword id="KW-0238">DNA-binding</keyword>
<protein>
    <recommendedName>
        <fullName evidence="1">Nucleoid-associated protein SAV0479</fullName>
    </recommendedName>
</protein>